<name>VIRB5_AGRFC</name>
<organism>
    <name type="scientific">Agrobacterium fabrum (strain C58 / ATCC 33970)</name>
    <name type="common">Agrobacterium tumefaciens (strain C58)</name>
    <dbReference type="NCBI Taxonomy" id="176299"/>
    <lineage>
        <taxon>Bacteria</taxon>
        <taxon>Pseudomonadati</taxon>
        <taxon>Pseudomonadota</taxon>
        <taxon>Alphaproteobacteria</taxon>
        <taxon>Hyphomicrobiales</taxon>
        <taxon>Rhizobiaceae</taxon>
        <taxon>Rhizobium/Agrobacterium group</taxon>
        <taxon>Agrobacterium</taxon>
        <taxon>Agrobacterium tumefaciens complex</taxon>
    </lineage>
</organism>
<dbReference type="EMBL" id="X53264">
    <property type="protein sequence ID" value="CAA37358.1"/>
    <property type="molecule type" value="Genomic_DNA"/>
</dbReference>
<dbReference type="EMBL" id="J03320">
    <property type="protein sequence ID" value="AAA91595.1"/>
    <property type="molecule type" value="Genomic_DNA"/>
</dbReference>
<dbReference type="EMBL" id="AE007871">
    <property type="protein sequence ID" value="AAK90933.1"/>
    <property type="molecule type" value="Genomic_DNA"/>
</dbReference>
<dbReference type="PIR" id="AI3248">
    <property type="entry name" value="AI3248"/>
</dbReference>
<dbReference type="PIR" id="S12345">
    <property type="entry name" value="B5AG58"/>
</dbReference>
<dbReference type="RefSeq" id="NP_396492.1">
    <property type="nucleotide sequence ID" value="NC_003065.3"/>
</dbReference>
<dbReference type="RefSeq" id="WP_010891499.1">
    <property type="nucleotide sequence ID" value="NC_003065.3"/>
</dbReference>
<dbReference type="SMR" id="P17795"/>
<dbReference type="IntAct" id="P17795">
    <property type="interactions" value="3"/>
</dbReference>
<dbReference type="EnsemblBacteria" id="AAK90933">
    <property type="protein sequence ID" value="AAK90933"/>
    <property type="gene ID" value="Atu6171"/>
</dbReference>
<dbReference type="GeneID" id="86882426"/>
<dbReference type="GeneID" id="92775038"/>
<dbReference type="KEGG" id="atu:Atu6171"/>
<dbReference type="PATRIC" id="fig|176299.10.peg.5367"/>
<dbReference type="HOGENOM" id="CLU_1255117_0_0_5"/>
<dbReference type="OrthoDB" id="8071245at2"/>
<dbReference type="BioCyc" id="AGRO:ATU6171-MONOMER"/>
<dbReference type="Proteomes" id="UP000000813">
    <property type="component" value="Plasmid Ti"/>
</dbReference>
<dbReference type="GO" id="GO:0043684">
    <property type="term" value="C:type IV secretion system complex"/>
    <property type="evidence" value="ECO:0000317"/>
    <property type="project" value="PAMGO_GAT"/>
</dbReference>
<dbReference type="GO" id="GO:0030255">
    <property type="term" value="P:protein secretion by the type IV secretion system"/>
    <property type="evidence" value="ECO:0000317"/>
    <property type="project" value="PAMGO_GAT"/>
</dbReference>
<dbReference type="NCBIfam" id="NF010434">
    <property type="entry name" value="PRK13860.1"/>
    <property type="match status" value="1"/>
</dbReference>
<geneLocation type="plasmid">
    <name>pTiC58</name>
</geneLocation>
<comment type="function">
    <text>VirB proteins are suggested to act at the bacterial surface and there play an important role in directing T-DNA transfer to plant cells.</text>
</comment>
<comment type="interaction">
    <interactant intactId="EBI-6400510">
        <id>P17795</id>
    </interactant>
    <interactant intactId="EBI-6402098">
        <id>P58758</id>
        <label>tzs</label>
    </interactant>
    <organismsDiffer>false</organismsDiffer>
    <experiments>4</experiments>
</comment>
<comment type="similarity">
    <text evidence="2">Belongs to the virb5 family.</text>
</comment>
<proteinExistence type="evidence at protein level"/>
<accession>P17795</accession>
<evidence type="ECO:0000255" key="1"/>
<evidence type="ECO:0000305" key="2"/>
<protein>
    <recommendedName>
        <fullName>Protein virB5</fullName>
    </recommendedName>
</protein>
<sequence length="220" mass="23269">MKIMQLVAAAMAVSLLSVGPARAQFVVSDPATEAETLATALETAANLEQTITMVAMLTSAYGVTGLLTSLNQKNQYPSTRDLDTEMFSPRMPMSTTARAITTDTDRAVVGGDAEADLLRSQITGSANSAGIAADNLETMDKRLTANAETSTQLSRSRNIMQATVTNGLLLKQIHDAMIQNVQATSLLTMTTAQAGLHEAEEAAAQRKEHQKTAVIFGAVP</sequence>
<keyword id="KW-0192">Crown gall tumor</keyword>
<keyword id="KW-0614">Plasmid</keyword>
<keyword id="KW-1185">Reference proteome</keyword>
<keyword id="KW-0732">Signal</keyword>
<gene>
    <name type="primary">virB5</name>
    <name type="ordered locus">Atu6171</name>
    <name type="ORF">AGR_pTi_9</name>
</gene>
<feature type="signal peptide" evidence="1">
    <location>
        <begin position="1"/>
        <end position="23"/>
    </location>
</feature>
<feature type="chain" id="PRO_0000022666" description="Protein virB5">
    <location>
        <begin position="24"/>
        <end position="220"/>
    </location>
</feature>
<reference key="1">
    <citation type="journal article" date="1990" name="Mol. Gen. Genet.">
        <title>The virB operon of Agrobacterium tumefaciens pTiC58 encodes 11 open reading frames.</title>
        <authorList>
            <person name="Kuldau G.A."/>
            <person name="de Vos G."/>
            <person name="Owen J."/>
            <person name="McCaffrey G."/>
            <person name="Zambryski P."/>
        </authorList>
    </citation>
    <scope>NUCLEOTIDE SEQUENCE [GENOMIC DNA]</scope>
</reference>
<reference key="2">
    <citation type="journal article" date="1990" name="Plasmid">
        <title>Molecular characterization of the vir regulon of Agrobacterium tumefaciens: complete nucleotide sequence and gene organization of the 28.63-kbp regulon cloned as a single unit.</title>
        <authorList>
            <person name="Rogowsky P.M."/>
            <person name="Powell B.S."/>
            <person name="Shirasu K."/>
            <person name="Lin T.-S."/>
            <person name="Morel P."/>
            <person name="Zyprian E.M."/>
            <person name="Steck T.R."/>
            <person name="Kado C.I."/>
        </authorList>
    </citation>
    <scope>NUCLEOTIDE SEQUENCE [GENOMIC DNA]</scope>
</reference>
<reference key="3">
    <citation type="journal article" date="1990" name="Mol. Microbiol.">
        <title>Characterization of the virB operon of an Agrobacterium tumefaciens Ti plasmid: nucleotide sequence and protein analysis.</title>
        <authorList>
            <person name="Shirasu K."/>
            <person name="Morel P."/>
            <person name="Kado C.I."/>
        </authorList>
    </citation>
    <scope>NUCLEOTIDE SEQUENCE [GENOMIC DNA]</scope>
</reference>
<reference key="4">
    <citation type="journal article" date="2001" name="Science">
        <title>The genome of the natural genetic engineer Agrobacterium tumefaciens C58.</title>
        <authorList>
            <person name="Wood D.W."/>
            <person name="Setubal J.C."/>
            <person name="Kaul R."/>
            <person name="Monks D.E."/>
            <person name="Kitajima J.P."/>
            <person name="Okura V.K."/>
            <person name="Zhou Y."/>
            <person name="Chen L."/>
            <person name="Wood G.E."/>
            <person name="Almeida N.F. Jr."/>
            <person name="Woo L."/>
            <person name="Chen Y."/>
            <person name="Paulsen I.T."/>
            <person name="Eisen J.A."/>
            <person name="Karp P.D."/>
            <person name="Bovee D. Sr."/>
            <person name="Chapman P."/>
            <person name="Clendenning J."/>
            <person name="Deatherage G."/>
            <person name="Gillet W."/>
            <person name="Grant C."/>
            <person name="Kutyavin T."/>
            <person name="Levy R."/>
            <person name="Li M.-J."/>
            <person name="McClelland E."/>
            <person name="Palmieri A."/>
            <person name="Raymond C."/>
            <person name="Rouse G."/>
            <person name="Saenphimmachak C."/>
            <person name="Wu Z."/>
            <person name="Romero P."/>
            <person name="Gordon D."/>
            <person name="Zhang S."/>
            <person name="Yoo H."/>
            <person name="Tao Y."/>
            <person name="Biddle P."/>
            <person name="Jung M."/>
            <person name="Krespan W."/>
            <person name="Perry M."/>
            <person name="Gordon-Kamm B."/>
            <person name="Liao L."/>
            <person name="Kim S."/>
            <person name="Hendrick C."/>
            <person name="Zhao Z.-Y."/>
            <person name="Dolan M."/>
            <person name="Chumley F."/>
            <person name="Tingey S.V."/>
            <person name="Tomb J.-F."/>
            <person name="Gordon M.P."/>
            <person name="Olson M.V."/>
            <person name="Nester E.W."/>
        </authorList>
    </citation>
    <scope>NUCLEOTIDE SEQUENCE [LARGE SCALE GENOMIC DNA]</scope>
</reference>
<reference key="5">
    <citation type="journal article" date="2001" name="Science">
        <title>Genome sequence of the plant pathogen and biotechnology agent Agrobacterium tumefaciens C58.</title>
        <authorList>
            <person name="Goodner B."/>
            <person name="Hinkle G."/>
            <person name="Gattung S."/>
            <person name="Miller N."/>
            <person name="Blanchard M."/>
            <person name="Qurollo B."/>
            <person name="Goldman B.S."/>
            <person name="Cao Y."/>
            <person name="Askenazi M."/>
            <person name="Halling C."/>
            <person name="Mullin L."/>
            <person name="Houmiel K."/>
            <person name="Gordon J."/>
            <person name="Vaudin M."/>
            <person name="Iartchouk O."/>
            <person name="Epp A."/>
            <person name="Liu F."/>
            <person name="Wollam C."/>
            <person name="Allinger M."/>
            <person name="Doughty D."/>
            <person name="Scott C."/>
            <person name="Lappas C."/>
            <person name="Markelz B."/>
            <person name="Flanagan C."/>
            <person name="Crowell C."/>
            <person name="Gurson J."/>
            <person name="Lomo C."/>
            <person name="Sear C."/>
            <person name="Strub G."/>
            <person name="Cielo C."/>
            <person name="Slater S."/>
        </authorList>
    </citation>
    <scope>NUCLEOTIDE SEQUENCE [LARGE SCALE GENOMIC DNA]</scope>
    <source>
        <strain>C58 / ATCC 33970</strain>
    </source>
</reference>